<protein>
    <recommendedName>
        <fullName>GDSL esterase/lipase At1g59406</fullName>
        <ecNumber>3.1.1.-</ecNumber>
    </recommendedName>
    <alternativeName>
        <fullName>Extracellular lipase At1g59406</fullName>
    </alternativeName>
</protein>
<keyword id="KW-0325">Glycoprotein</keyword>
<keyword id="KW-0378">Hydrolase</keyword>
<keyword id="KW-0442">Lipid degradation</keyword>
<keyword id="KW-0443">Lipid metabolism</keyword>
<keyword id="KW-1185">Reference proteome</keyword>
<keyword id="KW-0964">Secreted</keyword>
<keyword id="KW-0732">Signal</keyword>
<feature type="signal peptide" evidence="2">
    <location>
        <begin position="1"/>
        <end position="19"/>
    </location>
</feature>
<feature type="chain" id="PRO_0000417429" description="GDSL esterase/lipase At1g59406">
    <location>
        <begin position="20"/>
        <end position="349"/>
    </location>
</feature>
<feature type="active site" description="Nucleophile" evidence="1">
    <location>
        <position position="37"/>
    </location>
</feature>
<feature type="active site" evidence="1">
    <location>
        <position position="324"/>
    </location>
</feature>
<feature type="active site" evidence="1">
    <location>
        <position position="327"/>
    </location>
</feature>
<feature type="glycosylation site" description="N-linked (GlcNAc...) asparagine" evidence="2">
    <location>
        <position position="25"/>
    </location>
</feature>
<feature type="glycosylation site" description="N-linked (GlcNAc...) asparagine" evidence="2">
    <location>
        <position position="316"/>
    </location>
</feature>
<reference key="1">
    <citation type="journal article" date="2000" name="Nature">
        <title>Sequence and analysis of chromosome 1 of the plant Arabidopsis thaliana.</title>
        <authorList>
            <person name="Theologis A."/>
            <person name="Ecker J.R."/>
            <person name="Palm C.J."/>
            <person name="Federspiel N.A."/>
            <person name="Kaul S."/>
            <person name="White O."/>
            <person name="Alonso J."/>
            <person name="Altafi H."/>
            <person name="Araujo R."/>
            <person name="Bowman C.L."/>
            <person name="Brooks S.Y."/>
            <person name="Buehler E."/>
            <person name="Chan A."/>
            <person name="Chao Q."/>
            <person name="Chen H."/>
            <person name="Cheuk R.F."/>
            <person name="Chin C.W."/>
            <person name="Chung M.K."/>
            <person name="Conn L."/>
            <person name="Conway A.B."/>
            <person name="Conway A.R."/>
            <person name="Creasy T.H."/>
            <person name="Dewar K."/>
            <person name="Dunn P."/>
            <person name="Etgu P."/>
            <person name="Feldblyum T.V."/>
            <person name="Feng J.-D."/>
            <person name="Fong B."/>
            <person name="Fujii C.Y."/>
            <person name="Gill J.E."/>
            <person name="Goldsmith A.D."/>
            <person name="Haas B."/>
            <person name="Hansen N.F."/>
            <person name="Hughes B."/>
            <person name="Huizar L."/>
            <person name="Hunter J.L."/>
            <person name="Jenkins J."/>
            <person name="Johnson-Hopson C."/>
            <person name="Khan S."/>
            <person name="Khaykin E."/>
            <person name="Kim C.J."/>
            <person name="Koo H.L."/>
            <person name="Kremenetskaia I."/>
            <person name="Kurtz D.B."/>
            <person name="Kwan A."/>
            <person name="Lam B."/>
            <person name="Langin-Hooper S."/>
            <person name="Lee A."/>
            <person name="Lee J.M."/>
            <person name="Lenz C.A."/>
            <person name="Li J.H."/>
            <person name="Li Y.-P."/>
            <person name="Lin X."/>
            <person name="Liu S.X."/>
            <person name="Liu Z.A."/>
            <person name="Luros J.S."/>
            <person name="Maiti R."/>
            <person name="Marziali A."/>
            <person name="Militscher J."/>
            <person name="Miranda M."/>
            <person name="Nguyen M."/>
            <person name="Nierman W.C."/>
            <person name="Osborne B.I."/>
            <person name="Pai G."/>
            <person name="Peterson J."/>
            <person name="Pham P.K."/>
            <person name="Rizzo M."/>
            <person name="Rooney T."/>
            <person name="Rowley D."/>
            <person name="Sakano H."/>
            <person name="Salzberg S.L."/>
            <person name="Schwartz J.R."/>
            <person name="Shinn P."/>
            <person name="Southwick A.M."/>
            <person name="Sun H."/>
            <person name="Tallon L.J."/>
            <person name="Tambunga G."/>
            <person name="Toriumi M.J."/>
            <person name="Town C.D."/>
            <person name="Utterback T."/>
            <person name="Van Aken S."/>
            <person name="Vaysberg M."/>
            <person name="Vysotskaia V.S."/>
            <person name="Walker M."/>
            <person name="Wu D."/>
            <person name="Yu G."/>
            <person name="Fraser C.M."/>
            <person name="Venter J.C."/>
            <person name="Davis R.W."/>
        </authorList>
    </citation>
    <scope>NUCLEOTIDE SEQUENCE [LARGE SCALE GENOMIC DNA]</scope>
    <source>
        <strain>cv. Columbia</strain>
    </source>
</reference>
<reference key="2">
    <citation type="journal article" date="2017" name="Plant J.">
        <title>Araport11: a complete reannotation of the Arabidopsis thaliana reference genome.</title>
        <authorList>
            <person name="Cheng C.Y."/>
            <person name="Krishnakumar V."/>
            <person name="Chan A.P."/>
            <person name="Thibaud-Nissen F."/>
            <person name="Schobel S."/>
            <person name="Town C.D."/>
        </authorList>
    </citation>
    <scope>GENOME REANNOTATION</scope>
    <source>
        <strain>cv. Columbia</strain>
    </source>
</reference>
<reference key="3">
    <citation type="submission" date="2004-09" db="EMBL/GenBank/DDBJ databases">
        <authorList>
            <consortium name="Center for eukaryotic structural genomics (CESG)"/>
        </authorList>
    </citation>
    <scope>NUCLEOTIDE SEQUENCE [LARGE SCALE MRNA] OF 40-349</scope>
</reference>
<reference key="4">
    <citation type="journal article" date="2004" name="Prog. Lipid Res.">
        <title>GDSL family of serine esterases/lipases.</title>
        <authorList>
            <person name="Akoh C.C."/>
            <person name="Lee G.-C."/>
            <person name="Liaw Y.-C."/>
            <person name="Huang T.-H."/>
            <person name="Shaw J.-F."/>
        </authorList>
    </citation>
    <scope>REVIEW</scope>
</reference>
<reference key="5">
    <citation type="journal article" date="2008" name="Pak. J. Biol. Sci.">
        <title>Sequence analysis of GDSL lipase gene family in Arabidopsis thaliana.</title>
        <authorList>
            <person name="Ling H."/>
        </authorList>
    </citation>
    <scope>GENE FAMILY</scope>
</reference>
<dbReference type="EC" id="3.1.1.-"/>
<dbReference type="EMBL" id="AC027036">
    <property type="protein sequence ID" value="AAK62786.1"/>
    <property type="molecule type" value="Genomic_DNA"/>
</dbReference>
<dbReference type="EMBL" id="CP002684">
    <property type="protein sequence ID" value="AEE33577.1"/>
    <property type="molecule type" value="Genomic_DNA"/>
</dbReference>
<dbReference type="EMBL" id="BT015533">
    <property type="status" value="NOT_ANNOTATED_CDS"/>
    <property type="molecule type" value="mRNA"/>
</dbReference>
<dbReference type="RefSeq" id="NP_564738.3">
    <property type="nucleotide sequence ID" value="NM_104633.3"/>
</dbReference>
<dbReference type="RefSeq" id="NP_564741.3">
    <property type="nucleotide sequence ID" value="NM_104641.4"/>
</dbReference>
<dbReference type="RefSeq" id="NP_683444.2">
    <property type="nucleotide sequence ID" value="NM_148603.3"/>
</dbReference>
<dbReference type="SMR" id="P0DI15"/>
<dbReference type="FunCoup" id="P0DI15">
    <property type="interactions" value="96"/>
</dbReference>
<dbReference type="STRING" id="3702.P0DI15"/>
<dbReference type="GlyGen" id="P0DI15">
    <property type="glycosylation" value="2 sites"/>
</dbReference>
<dbReference type="DNASU" id="842238"/>
<dbReference type="EnsemblPlants" id="AT1G58725.1">
    <property type="protein sequence ID" value="AT1G58725.1"/>
    <property type="gene ID" value="AT1G58725"/>
</dbReference>
<dbReference type="EnsemblPlants" id="AT1G59030.1">
    <property type="protein sequence ID" value="AT1G59030.1"/>
    <property type="gene ID" value="AT1G59030"/>
</dbReference>
<dbReference type="EnsemblPlants" id="AT1G59406.1">
    <property type="protein sequence ID" value="AT1G59406.1"/>
    <property type="gene ID" value="AT1G59406"/>
</dbReference>
<dbReference type="GeneID" id="842238"/>
<dbReference type="Gramene" id="AT1G58725.1">
    <property type="protein sequence ID" value="AT1G58725.1"/>
    <property type="gene ID" value="AT1G58725"/>
</dbReference>
<dbReference type="Gramene" id="AT1G59030.1">
    <property type="protein sequence ID" value="AT1G59030.1"/>
    <property type="gene ID" value="AT1G59030"/>
</dbReference>
<dbReference type="Gramene" id="AT1G59406.1">
    <property type="protein sequence ID" value="AT1G59406.1"/>
    <property type="gene ID" value="AT1G59406"/>
</dbReference>
<dbReference type="KEGG" id="ath:AT1G58725"/>
<dbReference type="KEGG" id="ath:AT1G59030"/>
<dbReference type="KEGG" id="ath:AT1G59406"/>
<dbReference type="Araport" id="AT1G59406"/>
<dbReference type="TAIR" id="AT1G59406"/>
<dbReference type="HOGENOM" id="CLU_015101_0_1_1"/>
<dbReference type="InParanoid" id="P0DI15"/>
<dbReference type="OMA" id="RSCEDQA"/>
<dbReference type="PhylomeDB" id="P0DI15"/>
<dbReference type="PRO" id="PR:P0DI15"/>
<dbReference type="Proteomes" id="UP000006548">
    <property type="component" value="Chromosome 1"/>
</dbReference>
<dbReference type="ExpressionAtlas" id="P0DI15">
    <property type="expression patterns" value="baseline"/>
</dbReference>
<dbReference type="GO" id="GO:0005576">
    <property type="term" value="C:extracellular region"/>
    <property type="evidence" value="ECO:0007669"/>
    <property type="project" value="UniProtKB-SubCell"/>
</dbReference>
<dbReference type="GO" id="GO:0016298">
    <property type="term" value="F:lipase activity"/>
    <property type="evidence" value="ECO:0007669"/>
    <property type="project" value="InterPro"/>
</dbReference>
<dbReference type="GO" id="GO:0016042">
    <property type="term" value="P:lipid catabolic process"/>
    <property type="evidence" value="ECO:0007669"/>
    <property type="project" value="UniProtKB-KW"/>
</dbReference>
<dbReference type="CDD" id="cd01837">
    <property type="entry name" value="SGNH_plant_lipase_like"/>
    <property type="match status" value="1"/>
</dbReference>
<dbReference type="FunFam" id="3.40.50.1110:FF:000003">
    <property type="entry name" value="GDSL esterase/lipase APG"/>
    <property type="match status" value="1"/>
</dbReference>
<dbReference type="Gene3D" id="3.40.50.1110">
    <property type="entry name" value="SGNH hydrolase"/>
    <property type="match status" value="1"/>
</dbReference>
<dbReference type="InterPro" id="IPR001087">
    <property type="entry name" value="GDSL"/>
</dbReference>
<dbReference type="InterPro" id="IPR050592">
    <property type="entry name" value="GDSL_lipolytic_enzyme"/>
</dbReference>
<dbReference type="InterPro" id="IPR008265">
    <property type="entry name" value="Lipase_GDSL_AS"/>
</dbReference>
<dbReference type="InterPro" id="IPR036514">
    <property type="entry name" value="SGNH_hydro_sf"/>
</dbReference>
<dbReference type="InterPro" id="IPR035669">
    <property type="entry name" value="SGNH_plant_lipase-like"/>
</dbReference>
<dbReference type="PANTHER" id="PTHR45642:SF65">
    <property type="entry name" value="BNAA02G25900D PROTEIN"/>
    <property type="match status" value="1"/>
</dbReference>
<dbReference type="PANTHER" id="PTHR45642">
    <property type="entry name" value="GDSL ESTERASE/LIPASE EXL3"/>
    <property type="match status" value="1"/>
</dbReference>
<dbReference type="Pfam" id="PF00657">
    <property type="entry name" value="Lipase_GDSL"/>
    <property type="match status" value="1"/>
</dbReference>
<dbReference type="SUPFAM" id="SSF52266">
    <property type="entry name" value="SGNH hydrolase"/>
    <property type="match status" value="1"/>
</dbReference>
<dbReference type="PROSITE" id="PS01098">
    <property type="entry name" value="LIPASE_GDSL_SER"/>
    <property type="match status" value="1"/>
</dbReference>
<comment type="subcellular location">
    <subcellularLocation>
        <location evidence="3">Secreted</location>
    </subcellularLocation>
</comment>
<comment type="similarity">
    <text evidence="3">Belongs to the 'GDSL' lipolytic enzyme family.</text>
</comment>
<name>GDL27_ARATH</name>
<accession>P0DI15</accession>
<accession>B3H492</accession>
<accession>Q93W97</accession>
<proteinExistence type="evidence at transcript level"/>
<sequence length="349" mass="38858">MKIQILLFALVLIFVEANAATQGKNTTIPALIVFGDSIMDTGNNNNLPTLLKCNFPPYGKDYPGGFATGRFSDGRVPSDLIAEKLGLAKTLPAYMNPYLKPEDLLKGVTFASGGTGYDPLTAKIMSVISVWDQLINFKEYISKIKRHFGEEKAKDILEHSFFLVVSSSNDLAHTYLAQTHRYDRTSYANFLADSAVHFVRELHKLGARKIGVFSAVPVGCVPLQRTVFGGFFTRGCNQPLNNMAKQFNARLSPALDSLDKELDGVILYINVYDTLFDMIQHPKKYGFEVADRGCCGKGLLAISYLCNSLNPFTCSNSSAYIFWDSYHPSERAYQVIVDNLLDKYLSKVY</sequence>
<organism>
    <name type="scientific">Arabidopsis thaliana</name>
    <name type="common">Mouse-ear cress</name>
    <dbReference type="NCBI Taxonomy" id="3702"/>
    <lineage>
        <taxon>Eukaryota</taxon>
        <taxon>Viridiplantae</taxon>
        <taxon>Streptophyta</taxon>
        <taxon>Embryophyta</taxon>
        <taxon>Tracheophyta</taxon>
        <taxon>Spermatophyta</taxon>
        <taxon>Magnoliopsida</taxon>
        <taxon>eudicotyledons</taxon>
        <taxon>Gunneridae</taxon>
        <taxon>Pentapetalae</taxon>
        <taxon>rosids</taxon>
        <taxon>malvids</taxon>
        <taxon>Brassicales</taxon>
        <taxon>Brassicaceae</taxon>
        <taxon>Camelineae</taxon>
        <taxon>Arabidopsis</taxon>
    </lineage>
</organism>
<gene>
    <name type="ordered locus">At1g59406</name>
    <name type="ORF">T4M14.17</name>
</gene>
<evidence type="ECO:0000250" key="1"/>
<evidence type="ECO:0000255" key="2"/>
<evidence type="ECO:0000305" key="3"/>